<organism>
    <name type="scientific">Saccharomyces cerevisiae (strain ATCC 204508 / S288c)</name>
    <name type="common">Baker's yeast</name>
    <dbReference type="NCBI Taxonomy" id="559292"/>
    <lineage>
        <taxon>Eukaryota</taxon>
        <taxon>Fungi</taxon>
        <taxon>Dikarya</taxon>
        <taxon>Ascomycota</taxon>
        <taxon>Saccharomycotina</taxon>
        <taxon>Saccharomycetes</taxon>
        <taxon>Saccharomycetales</taxon>
        <taxon>Saccharomycetaceae</taxon>
        <taxon>Saccharomyces</taxon>
    </lineage>
</organism>
<keyword id="KW-0002">3D-structure</keyword>
<keyword id="KW-0007">Acetylation</keyword>
<keyword id="KW-0030">Aminoacyl-tRNA synthetase</keyword>
<keyword id="KW-0067">ATP-binding</keyword>
<keyword id="KW-0963">Cytoplasm</keyword>
<keyword id="KW-0903">Direct protein sequencing</keyword>
<keyword id="KW-0436">Ligase</keyword>
<keyword id="KW-0547">Nucleotide-binding</keyword>
<keyword id="KW-0648">Protein biosynthesis</keyword>
<keyword id="KW-1185">Reference proteome</keyword>
<gene>
    <name type="primary">MES1</name>
    <name type="ordered locus">YGR264C</name>
</gene>
<sequence>MSFLISFDKSKKHPAHLQLANNLKIALALEYASKNLKPEVDNDNAAMELRNTKEPFLLFDANAILRYVMDDFEGQTSDKYQFALASLQNLLYHKELPQQHVEVLTNKAIENYLVELKEPLTTTDLILFANVYALNSSLVHSKFPELPSKVHNAVALAKKHVPRDSSSFKNIGAVKIQADLTVKPKDSEILPKPNERNILITSALPYVNNVPHLGNIIGSVLSADIFARYCKGRNYNALFICGTDEYGTATETKALEEGVTPRQLCDKYHKIHSDVYKWFQIGFDYFGRTTTDKQTEIAQHIFTKLNSNGYLEEQSMKQLYCPVHNSYLADRYVEGECPKCHYDDARGDQCDKCGALLDPFELINPRCKLDDASPEPKYSDHIFLSLDKLESQISEWVEKASEEGNWSKNSKTITQSWLKDGLKPRCITRDLVWGTPVPLEKYKDKVLYVWFDATIGYVSITSNYTKEWKQWWNNPEHVSLYQFMGKDNVPFHTVVFPGSQLGTEENWTMLHHLNTTEYLQYENGKFSKSRGVGVFGNNAQDSGISPSVWRYYLASVRPESSDSHFSWDDFVARNNSELLANLGNFVNRLIKFVNAKYNGVVPKFDPKKVSNYDGLVKDINEILSNYVKEMELGHERRGLEIAMSLSARGNQFLQENKLDNTLFSQSPEKSDAVVAVGLNIIYAVSSIITPYMPEIGEKINKMLNAPALKIDDRFHLAILEGHNINKAEYLFQRIDEKKIDEWRAKYGGQQV</sequence>
<feature type="initiator methionine" description="Removed" evidence="8 9">
    <location>
        <position position="1"/>
    </location>
</feature>
<feature type="chain" id="PRO_0000139269" description="Methionine--tRNA ligase, cytoplasmic">
    <location>
        <begin position="2"/>
        <end position="751"/>
    </location>
</feature>
<feature type="region of interest" description="Interaction with ARC1">
    <location>
        <begin position="36"/>
        <end position="92"/>
    </location>
</feature>
<feature type="short sequence motif" description="'HIGH' region">
    <location>
        <begin position="205"/>
        <end position="215"/>
    </location>
</feature>
<feature type="short sequence motif" description="'KMSKS' region">
    <location>
        <begin position="525"/>
        <end position="529"/>
    </location>
</feature>
<feature type="binding site" evidence="1">
    <location>
        <position position="411"/>
    </location>
    <ligand>
        <name>ATP</name>
        <dbReference type="ChEBI" id="CHEBI:30616"/>
    </ligand>
</feature>
<feature type="modified residue" description="N-acetylserine" evidence="8 9">
    <location>
        <position position="2"/>
    </location>
</feature>
<feature type="mutagenesis site" description="Abolishes interaction with ARC1." evidence="5">
    <original>A</original>
    <variation>H</variation>
    <location>
        <position position="63"/>
    </location>
</feature>
<feature type="mutagenesis site" description="In mes1; renders the protein unstable in vitro, elevates the KM for methionine in vivo." evidence="7">
    <original>G</original>
    <variation>D</variation>
    <location>
        <position position="502"/>
    </location>
</feature>
<feature type="mutagenesis site" description="Abolishes aminoacylation activity." evidence="6">
    <original>N</original>
    <variation>D</variation>
    <variation>Q</variation>
    <location>
        <position position="584"/>
    </location>
</feature>
<feature type="mutagenesis site" description="Abolishes aminoacylation activity." evidence="6">
    <original>R</original>
    <variation>A</variation>
    <variation>K</variation>
    <variation>Q</variation>
    <location>
        <position position="588"/>
    </location>
</feature>
<feature type="sequence conflict" description="In Ref. 1; CAA24627 and 3." evidence="12" ref="1 3">
    <original>T</original>
    <variation>A</variation>
    <location>
        <position position="122"/>
    </location>
</feature>
<feature type="strand" evidence="13">
    <location>
        <begin position="3"/>
        <end position="5"/>
    </location>
</feature>
<feature type="strand" evidence="13">
    <location>
        <begin position="10"/>
        <end position="12"/>
    </location>
</feature>
<feature type="helix" evidence="13">
    <location>
        <begin position="15"/>
        <end position="31"/>
    </location>
</feature>
<feature type="strand" evidence="13">
    <location>
        <begin position="49"/>
        <end position="51"/>
    </location>
</feature>
<feature type="helix" evidence="13">
    <location>
        <begin position="61"/>
        <end position="68"/>
    </location>
</feature>
<feature type="turn" evidence="13">
    <location>
        <begin position="73"/>
        <end position="76"/>
    </location>
</feature>
<feature type="helix" evidence="13">
    <location>
        <begin position="78"/>
        <end position="86"/>
    </location>
</feature>
<feature type="turn" evidence="13">
    <location>
        <begin position="87"/>
        <end position="89"/>
    </location>
</feature>
<feature type="helix" evidence="13">
    <location>
        <begin position="90"/>
        <end position="92"/>
    </location>
</feature>
<feature type="strand" evidence="13">
    <location>
        <begin position="93"/>
        <end position="95"/>
    </location>
</feature>
<feature type="helix" evidence="13">
    <location>
        <begin position="98"/>
        <end position="111"/>
    </location>
</feature>
<feature type="helix" evidence="13">
    <location>
        <begin position="122"/>
        <end position="142"/>
    </location>
</feature>
<feature type="helix" evidence="13">
    <location>
        <begin position="148"/>
        <end position="157"/>
    </location>
</feature>
<name>SYMC_YEAST</name>
<dbReference type="EC" id="6.1.1.10"/>
<dbReference type="EMBL" id="V01316">
    <property type="protein sequence ID" value="CAA24627.1"/>
    <property type="molecule type" value="Genomic_DNA"/>
</dbReference>
<dbReference type="EMBL" id="Y07777">
    <property type="protein sequence ID" value="CAA69086.1"/>
    <property type="molecule type" value="Genomic_DNA"/>
</dbReference>
<dbReference type="EMBL" id="Z73049">
    <property type="protein sequence ID" value="CAA97293.1"/>
    <property type="molecule type" value="Genomic_DNA"/>
</dbReference>
<dbReference type="EMBL" id="BK006941">
    <property type="protein sequence ID" value="DAA08354.1"/>
    <property type="molecule type" value="Genomic_DNA"/>
</dbReference>
<dbReference type="PIR" id="S64597">
    <property type="entry name" value="SYBYMT"/>
</dbReference>
<dbReference type="RefSeq" id="NP_011780.3">
    <property type="nucleotide sequence ID" value="NM_001181393.3"/>
</dbReference>
<dbReference type="PDB" id="2HSN">
    <property type="method" value="X-ray"/>
    <property type="resolution" value="2.20 A"/>
    <property type="chains" value="A=2-160"/>
</dbReference>
<dbReference type="PDBsum" id="2HSN"/>
<dbReference type="SMR" id="P00958"/>
<dbReference type="BioGRID" id="33515">
    <property type="interactions" value="447"/>
</dbReference>
<dbReference type="ComplexPortal" id="CPX-1947">
    <property type="entry name" value="Methionyl glutamyl tRNA synthetase complex"/>
</dbReference>
<dbReference type="DIP" id="DIP-2211N"/>
<dbReference type="FunCoup" id="P00958">
    <property type="interactions" value="1265"/>
</dbReference>
<dbReference type="IntAct" id="P00958">
    <property type="interactions" value="29"/>
</dbReference>
<dbReference type="MINT" id="P00958"/>
<dbReference type="STRING" id="4932.YGR264C"/>
<dbReference type="iPTMnet" id="P00958"/>
<dbReference type="PaxDb" id="4932-YGR264C"/>
<dbReference type="PeptideAtlas" id="P00958"/>
<dbReference type="EnsemblFungi" id="YGR264C_mRNA">
    <property type="protein sequence ID" value="YGR264C"/>
    <property type="gene ID" value="YGR264C"/>
</dbReference>
<dbReference type="GeneID" id="853181"/>
<dbReference type="KEGG" id="sce:YGR264C"/>
<dbReference type="AGR" id="SGD:S000003496"/>
<dbReference type="SGD" id="S000003496">
    <property type="gene designation" value="MES1"/>
</dbReference>
<dbReference type="VEuPathDB" id="FungiDB:YGR264C"/>
<dbReference type="eggNOG" id="KOG1247">
    <property type="taxonomic scope" value="Eukaryota"/>
</dbReference>
<dbReference type="GeneTree" id="ENSGT00550000075017"/>
<dbReference type="HOGENOM" id="CLU_009710_4_1_1"/>
<dbReference type="InParanoid" id="P00958"/>
<dbReference type="OMA" id="HLNTTEY"/>
<dbReference type="OrthoDB" id="5844513at2759"/>
<dbReference type="BioCyc" id="YEAST:G3O-30933-MONOMER"/>
<dbReference type="BRENDA" id="6.1.1.10">
    <property type="organism ID" value="984"/>
</dbReference>
<dbReference type="BioGRID-ORCS" id="853181">
    <property type="hits" value="0 hits in 10 CRISPR screens"/>
</dbReference>
<dbReference type="CD-CODE" id="E03F929F">
    <property type="entry name" value="Stress granule"/>
</dbReference>
<dbReference type="EvolutionaryTrace" id="P00958"/>
<dbReference type="PRO" id="PR:P00958"/>
<dbReference type="Proteomes" id="UP000002311">
    <property type="component" value="Chromosome VII"/>
</dbReference>
<dbReference type="RNAct" id="P00958">
    <property type="molecule type" value="protein"/>
</dbReference>
<dbReference type="GO" id="GO:0017101">
    <property type="term" value="C:aminoacyl-tRNA synthetase multienzyme complex"/>
    <property type="evidence" value="ECO:0000318"/>
    <property type="project" value="GO_Central"/>
</dbReference>
<dbReference type="GO" id="GO:0005737">
    <property type="term" value="C:cytoplasm"/>
    <property type="evidence" value="ECO:0000314"/>
    <property type="project" value="SGD"/>
</dbReference>
<dbReference type="GO" id="GO:0010494">
    <property type="term" value="C:cytoplasmic stress granule"/>
    <property type="evidence" value="ECO:0000314"/>
    <property type="project" value="SGD"/>
</dbReference>
<dbReference type="GO" id="GO:0005829">
    <property type="term" value="C:cytosol"/>
    <property type="evidence" value="ECO:0000318"/>
    <property type="project" value="GO_Central"/>
</dbReference>
<dbReference type="GO" id="GO:0017102">
    <property type="term" value="C:methionyl glutamyl tRNA synthetase complex"/>
    <property type="evidence" value="ECO:0000314"/>
    <property type="project" value="SGD"/>
</dbReference>
<dbReference type="GO" id="GO:0005524">
    <property type="term" value="F:ATP binding"/>
    <property type="evidence" value="ECO:0007669"/>
    <property type="project" value="UniProtKB-KW"/>
</dbReference>
<dbReference type="GO" id="GO:0004825">
    <property type="term" value="F:methionine-tRNA ligase activity"/>
    <property type="evidence" value="ECO:0000314"/>
    <property type="project" value="SGD"/>
</dbReference>
<dbReference type="GO" id="GO:1990825">
    <property type="term" value="F:sequence-specific mRNA binding"/>
    <property type="evidence" value="ECO:0000314"/>
    <property type="project" value="SGD"/>
</dbReference>
<dbReference type="GO" id="GO:0006424">
    <property type="term" value="P:glutamyl-tRNA aminoacylation"/>
    <property type="evidence" value="ECO:0000303"/>
    <property type="project" value="ComplexPortal"/>
</dbReference>
<dbReference type="GO" id="GO:0006431">
    <property type="term" value="P:methionyl-tRNA aminoacylation"/>
    <property type="evidence" value="ECO:0000314"/>
    <property type="project" value="SGD"/>
</dbReference>
<dbReference type="CDD" id="cd07957">
    <property type="entry name" value="Anticodon_Ia_Met"/>
    <property type="match status" value="1"/>
</dbReference>
<dbReference type="CDD" id="cd10290">
    <property type="entry name" value="GST_C_MetRS_N_fungi"/>
    <property type="match status" value="1"/>
</dbReference>
<dbReference type="CDD" id="cd00814">
    <property type="entry name" value="MetRS_core"/>
    <property type="match status" value="1"/>
</dbReference>
<dbReference type="FunFam" id="2.20.28.20:FF:000001">
    <property type="entry name" value="Methionine--tRNA ligase"/>
    <property type="match status" value="1"/>
</dbReference>
<dbReference type="FunFam" id="1.20.1050.110:FF:000001">
    <property type="entry name" value="Methionine-tRNA ligase"/>
    <property type="match status" value="1"/>
</dbReference>
<dbReference type="FunFam" id="3.40.30.170:FF:000001">
    <property type="entry name" value="Methionine-tRNA ligase"/>
    <property type="match status" value="1"/>
</dbReference>
<dbReference type="FunFam" id="1.10.730.10:FF:000037">
    <property type="entry name" value="Methionyl-tRNA synthetase"/>
    <property type="match status" value="1"/>
</dbReference>
<dbReference type="Gene3D" id="1.20.1050.110">
    <property type="match status" value="1"/>
</dbReference>
<dbReference type="Gene3D" id="3.40.30.170">
    <property type="match status" value="1"/>
</dbReference>
<dbReference type="Gene3D" id="3.40.50.620">
    <property type="entry name" value="HUPs"/>
    <property type="match status" value="1"/>
</dbReference>
<dbReference type="Gene3D" id="1.10.730.10">
    <property type="entry name" value="Isoleucyl-tRNA Synthetase, Domain 1"/>
    <property type="match status" value="1"/>
</dbReference>
<dbReference type="Gene3D" id="2.20.28.20">
    <property type="entry name" value="Methionyl-tRNA synthetase, Zn-domain"/>
    <property type="match status" value="1"/>
</dbReference>
<dbReference type="HAMAP" id="MF_00098">
    <property type="entry name" value="Met_tRNA_synth_type1"/>
    <property type="match status" value="1"/>
</dbReference>
<dbReference type="InterPro" id="IPR001412">
    <property type="entry name" value="aa-tRNA-synth_I_CS"/>
</dbReference>
<dbReference type="InterPro" id="IPR041872">
    <property type="entry name" value="Anticodon_Met"/>
</dbReference>
<dbReference type="InterPro" id="IPR018285">
    <property type="entry name" value="Met-tRNA-synth_N"/>
</dbReference>
<dbReference type="InterPro" id="IPR023458">
    <property type="entry name" value="Met-tRNA_ligase_1"/>
</dbReference>
<dbReference type="InterPro" id="IPR014758">
    <property type="entry name" value="Met-tRNA_synth"/>
</dbReference>
<dbReference type="InterPro" id="IPR015413">
    <property type="entry name" value="Methionyl/Leucyl_tRNA_Synth"/>
</dbReference>
<dbReference type="InterPro" id="IPR033911">
    <property type="entry name" value="MetRS_core"/>
</dbReference>
<dbReference type="InterPro" id="IPR029038">
    <property type="entry name" value="MetRS_Zn"/>
</dbReference>
<dbReference type="InterPro" id="IPR014729">
    <property type="entry name" value="Rossmann-like_a/b/a_fold"/>
</dbReference>
<dbReference type="InterPro" id="IPR009080">
    <property type="entry name" value="tRNAsynth_Ia_anticodon-bd"/>
</dbReference>
<dbReference type="NCBIfam" id="TIGR00398">
    <property type="entry name" value="metG"/>
    <property type="match status" value="1"/>
</dbReference>
<dbReference type="NCBIfam" id="NF001100">
    <property type="entry name" value="PRK00133.1"/>
    <property type="match status" value="1"/>
</dbReference>
<dbReference type="PANTHER" id="PTHR45765">
    <property type="entry name" value="METHIONINE--TRNA LIGASE"/>
    <property type="match status" value="1"/>
</dbReference>
<dbReference type="PANTHER" id="PTHR45765:SF1">
    <property type="entry name" value="METHIONINE--TRNA LIGASE, CYTOPLASMIC"/>
    <property type="match status" value="1"/>
</dbReference>
<dbReference type="Pfam" id="PF19303">
    <property type="entry name" value="Anticodon_3"/>
    <property type="match status" value="1"/>
</dbReference>
<dbReference type="Pfam" id="PF09635">
    <property type="entry name" value="MetRS-N"/>
    <property type="match status" value="1"/>
</dbReference>
<dbReference type="Pfam" id="PF09334">
    <property type="entry name" value="tRNA-synt_1g"/>
    <property type="match status" value="1"/>
</dbReference>
<dbReference type="PRINTS" id="PR01041">
    <property type="entry name" value="TRNASYNTHMET"/>
</dbReference>
<dbReference type="SUPFAM" id="SSF47323">
    <property type="entry name" value="Anticodon-binding domain of a subclass of class I aminoacyl-tRNA synthetases"/>
    <property type="match status" value="1"/>
</dbReference>
<dbReference type="SUPFAM" id="SSF57770">
    <property type="entry name" value="Methionyl-tRNA synthetase (MetRS), Zn-domain"/>
    <property type="match status" value="1"/>
</dbReference>
<dbReference type="SUPFAM" id="SSF52374">
    <property type="entry name" value="Nucleotidylyl transferase"/>
    <property type="match status" value="1"/>
</dbReference>
<dbReference type="PROSITE" id="PS00178">
    <property type="entry name" value="AA_TRNA_LIGASE_I"/>
    <property type="match status" value="1"/>
</dbReference>
<accession>P00958</accession>
<accession>D6VV43</accession>
<comment type="function">
    <text evidence="10">Catalyzes the attachment of methionine to tRNA(Met) in a two-step reaction: methionine is first activated by ATP to form Met-AMP and then transferred to the acceptor end of tRNA(Met).</text>
</comment>
<comment type="catalytic activity">
    <reaction evidence="7 10 11">
        <text>tRNA(Met) + L-methionine + ATP = L-methionyl-tRNA(Met) + AMP + diphosphate</text>
        <dbReference type="Rhea" id="RHEA:13481"/>
        <dbReference type="Rhea" id="RHEA-COMP:9667"/>
        <dbReference type="Rhea" id="RHEA-COMP:9698"/>
        <dbReference type="ChEBI" id="CHEBI:30616"/>
        <dbReference type="ChEBI" id="CHEBI:33019"/>
        <dbReference type="ChEBI" id="CHEBI:57844"/>
        <dbReference type="ChEBI" id="CHEBI:78442"/>
        <dbReference type="ChEBI" id="CHEBI:78530"/>
        <dbReference type="ChEBI" id="CHEBI:456215"/>
        <dbReference type="EC" id="6.1.1.10"/>
    </reaction>
</comment>
<comment type="biophysicochemical properties">
    <kinetics>
        <KM evidence="7 10 11">6.6 uM for tRNA(Met) (in the absence of ARC1)</KM>
        <KM evidence="7 10 11">10 uM for methionine</KM>
        <text>The presence of ARC1 reduces the KM for tRNA(Met) to less than 0.1 uM and increases the catalytic efficiency more than 500-fold.</text>
    </kinetics>
</comment>
<comment type="subunit">
    <text evidence="2 3 5 10 11">Component of a yeast aminoacyl-tRNA synthase (aaRS) complex formed by methionyl-tRNA synthase MES1, glutamyl-tRNA synthase GUS1 and the tRNA aminoacylation cofactor ARC1 in a stoichiometric complex. Interacts (via N-ter) with ARC1 (via N-ter). Can also form a stable binary complex with ARC1 that is functional in terms of aminoacylation. ARC1 increases the affinity for cognate tRNAs due to the presence of a tRNA binding domain in the middle and C-terminal part of ARC1.</text>
</comment>
<comment type="interaction">
    <interactant intactId="EBI-18762">
        <id>P00958</id>
    </interactant>
    <interactant intactId="EBI-7224">
        <id>P46672</id>
        <label>ARC1</label>
    </interactant>
    <organismsDiffer>false</organismsDiffer>
    <experiments>8</experiments>
</comment>
<comment type="subcellular location">
    <subcellularLocation>
        <location evidence="3">Cytoplasm</location>
    </subcellularLocation>
    <text>Largely excluded from the nucleus.</text>
</comment>
<comment type="miscellaneous">
    <text evidence="4">Present with 85000 molecules/cell in log phase SD medium.</text>
</comment>
<comment type="similarity">
    <text evidence="12">Belongs to the class-I aminoacyl-tRNA synthetase family.</text>
</comment>
<reference key="1">
    <citation type="journal article" date="1983" name="Proc. Natl. Acad. Sci. U.S.A.">
        <title>Primary structure of the Saccharomyces cerevisiae gene for methionyl-tRNA synthetase.</title>
        <authorList>
            <person name="Walter P."/>
            <person name="Gangloff J."/>
            <person name="Bonnet J."/>
            <person name="Boulanger Y."/>
            <person name="Ebel J.-P."/>
            <person name="Fasiolo F."/>
        </authorList>
    </citation>
    <scope>NUCLEOTIDE SEQUENCE [GENOMIC DNA]</scope>
</reference>
<reference key="2">
    <citation type="submission" date="1983-09" db="EMBL/GenBank/DDBJ databases">
        <authorList>
            <person name="Fasiolo F."/>
        </authorList>
    </citation>
    <scope>SEQUENCE REVISION</scope>
</reference>
<reference key="3">
    <citation type="journal article" date="1985" name="J. Biol. Chem.">
        <title>Cytoplasmic methionyl-tRNA synthetase from Bakers' yeast. A monomer with a post-translationally modified N-terminus.</title>
        <authorList>
            <person name="Fasiolo F."/>
            <person name="Gibson B.W."/>
            <person name="Walter P."/>
            <person name="Chatton B."/>
            <person name="Biemann K."/>
            <person name="Boulanger Y."/>
        </authorList>
    </citation>
    <scope>NUCLEOTIDE SEQUENCE [GENOMIC DNA]</scope>
    <scope>PARTIAL PROTEIN SEQUENCE</scope>
    <scope>CLEAVAGE OF INITIATOR METHIONINE</scope>
    <scope>ACETYLATION AT SER-2</scope>
</reference>
<reference key="4">
    <citation type="journal article" date="1997" name="Yeast">
        <title>Analysis of an 11.6 kb region from the right arm of chromosome VII of Saccharomyces cerevisiae between the RAD2 and the MES1 genes reveals the presence of three new genes.</title>
        <authorList>
            <person name="Clemente M.L."/>
            <person name="Sartori G."/>
            <person name="Cardazzo B."/>
            <person name="Carignani G."/>
        </authorList>
    </citation>
    <scope>NUCLEOTIDE SEQUENCE [GENOMIC DNA]</scope>
    <source>
        <strain>ATCC 96604 / S288c / FY1679</strain>
    </source>
</reference>
<reference key="5">
    <citation type="journal article" date="1997" name="Nature">
        <title>The nucleotide sequence of Saccharomyces cerevisiae chromosome VII.</title>
        <authorList>
            <person name="Tettelin H."/>
            <person name="Agostoni-Carbone M.L."/>
            <person name="Albermann K."/>
            <person name="Albers M."/>
            <person name="Arroyo J."/>
            <person name="Backes U."/>
            <person name="Barreiros T."/>
            <person name="Bertani I."/>
            <person name="Bjourson A.J."/>
            <person name="Brueckner M."/>
            <person name="Bruschi C.V."/>
            <person name="Carignani G."/>
            <person name="Castagnoli L."/>
            <person name="Cerdan E."/>
            <person name="Clemente M.L."/>
            <person name="Coblenz A."/>
            <person name="Coglievina M."/>
            <person name="Coissac E."/>
            <person name="Defoor E."/>
            <person name="Del Bino S."/>
            <person name="Delius H."/>
            <person name="Delneri D."/>
            <person name="de Wergifosse P."/>
            <person name="Dujon B."/>
            <person name="Durand P."/>
            <person name="Entian K.-D."/>
            <person name="Eraso P."/>
            <person name="Escribano V."/>
            <person name="Fabiani L."/>
            <person name="Fartmann B."/>
            <person name="Feroli F."/>
            <person name="Feuermann M."/>
            <person name="Frontali L."/>
            <person name="Garcia-Gonzalez M."/>
            <person name="Garcia-Saez M.I."/>
            <person name="Goffeau A."/>
            <person name="Guerreiro P."/>
            <person name="Hani J."/>
            <person name="Hansen M."/>
            <person name="Hebling U."/>
            <person name="Hernandez K."/>
            <person name="Heumann K."/>
            <person name="Hilger F."/>
            <person name="Hofmann B."/>
            <person name="Indge K.J."/>
            <person name="James C.M."/>
            <person name="Klima R."/>
            <person name="Koetter P."/>
            <person name="Kramer B."/>
            <person name="Kramer W."/>
            <person name="Lauquin G."/>
            <person name="Leuther H."/>
            <person name="Louis E.J."/>
            <person name="Maillier E."/>
            <person name="Marconi A."/>
            <person name="Martegani E."/>
            <person name="Mazon M.J."/>
            <person name="Mazzoni C."/>
            <person name="McReynolds A.D.K."/>
            <person name="Melchioretto P."/>
            <person name="Mewes H.-W."/>
            <person name="Minenkova O."/>
            <person name="Mueller-Auer S."/>
            <person name="Nawrocki A."/>
            <person name="Netter P."/>
            <person name="Neu R."/>
            <person name="Nombela C."/>
            <person name="Oliver S.G."/>
            <person name="Panzeri L."/>
            <person name="Paoluzi S."/>
            <person name="Plevani P."/>
            <person name="Portetelle D."/>
            <person name="Portillo F."/>
            <person name="Potier S."/>
            <person name="Purnelle B."/>
            <person name="Rieger M."/>
            <person name="Riles L."/>
            <person name="Rinaldi T."/>
            <person name="Robben J."/>
            <person name="Rodrigues-Pousada C."/>
            <person name="Rodriguez-Belmonte E."/>
            <person name="Rodriguez-Torres A.M."/>
            <person name="Rose M."/>
            <person name="Ruzzi M."/>
            <person name="Saliola M."/>
            <person name="Sanchez-Perez M."/>
            <person name="Schaefer B."/>
            <person name="Schaefer M."/>
            <person name="Scharfe M."/>
            <person name="Schmidheini T."/>
            <person name="Schreer A."/>
            <person name="Skala J."/>
            <person name="Souciet J.-L."/>
            <person name="Steensma H.Y."/>
            <person name="Talla E."/>
            <person name="Thierry A."/>
            <person name="Vandenbol M."/>
            <person name="van der Aart Q.J.M."/>
            <person name="Van Dyck L."/>
            <person name="Vanoni M."/>
            <person name="Verhasselt P."/>
            <person name="Voet M."/>
            <person name="Volckaert G."/>
            <person name="Wambutt R."/>
            <person name="Watson M.D."/>
            <person name="Weber N."/>
            <person name="Wedler E."/>
            <person name="Wedler H."/>
            <person name="Wipfli P."/>
            <person name="Wolf K."/>
            <person name="Wright L.F."/>
            <person name="Zaccaria P."/>
            <person name="Zimmermann M."/>
            <person name="Zollner A."/>
            <person name="Kleine K."/>
        </authorList>
    </citation>
    <scope>NUCLEOTIDE SEQUENCE [LARGE SCALE GENOMIC DNA]</scope>
    <source>
        <strain>ATCC 204508 / S288c</strain>
    </source>
</reference>
<reference key="6">
    <citation type="journal article" date="2014" name="G3 (Bethesda)">
        <title>The reference genome sequence of Saccharomyces cerevisiae: Then and now.</title>
        <authorList>
            <person name="Engel S.R."/>
            <person name="Dietrich F.S."/>
            <person name="Fisk D.G."/>
            <person name="Binkley G."/>
            <person name="Balakrishnan R."/>
            <person name="Costanzo M.C."/>
            <person name="Dwight S.S."/>
            <person name="Hitz B.C."/>
            <person name="Karra K."/>
            <person name="Nash R.S."/>
            <person name="Weng S."/>
            <person name="Wong E.D."/>
            <person name="Lloyd P."/>
            <person name="Skrzypek M.S."/>
            <person name="Miyasato S.R."/>
            <person name="Simison M."/>
            <person name="Cherry J.M."/>
        </authorList>
    </citation>
    <scope>GENOME REANNOTATION</scope>
    <source>
        <strain>ATCC 204508 / S288c</strain>
    </source>
</reference>
<reference key="7">
    <citation type="journal article" date="1984" name="Proc. Natl. Acad. Sci. U.S.A.">
        <title>Strategy for the mass spectrometric verification and correction of the primary structures of proteins deduced from their DNA sequences.</title>
        <authorList>
            <person name="Gibson B.W."/>
            <person name="Biemann K."/>
        </authorList>
    </citation>
    <scope>PROTEIN SEQUENCE OF 10-90</scope>
    <scope>CLEAVAGE OF INITIATOR METHIONINE</scope>
    <scope>ACETYLATION AT SER-2</scope>
</reference>
<reference key="8">
    <citation type="journal article" date="1987" name="J. Biol. Chem.">
        <title>Cloning and characterization of the yeast methionyl-tRNA synthetase mutation mes1.</title>
        <authorList>
            <person name="Chatton B."/>
            <person name="Winsor B."/>
            <person name="Boulanger Y."/>
            <person name="Fasiolo F."/>
        </authorList>
    </citation>
    <scope>CATALYTIC ACTIVITY</scope>
    <scope>BIOPHYSICOCHEMICAL PROPERTIES</scope>
    <scope>MUTAGENESIS OF GLY-502</scope>
</reference>
<reference key="9">
    <citation type="journal article" date="1991" name="FEBS Lett.">
        <title>Identification of potential amino acid residues supporting anticodon recognition in yeast methionyl-tRNA synthetase.</title>
        <authorList>
            <person name="Despons L."/>
            <person name="Walter P."/>
            <person name="Senger B."/>
            <person name="Ebel J.-P."/>
            <person name="Fasiolo F."/>
        </authorList>
    </citation>
    <scope>MUTAGENESIS OF ASN-584 AND ARG-588</scope>
</reference>
<reference key="10">
    <citation type="journal article" date="1996" name="EMBO J.">
        <title>The yeast protein Arc1p binds to tRNA and functions as a cofactor for the methionyl- and glutamyl-tRNA synthetases.</title>
        <authorList>
            <person name="Simos G."/>
            <person name="Segref A."/>
            <person name="Fasiolo F."/>
            <person name="Hellmuth K."/>
            <person name="Shevshenko A."/>
            <person name="Mann M."/>
            <person name="Hurt E.C."/>
        </authorList>
    </citation>
    <scope>FUNCTION</scope>
    <scope>CATALYTIC ACTIVITY</scope>
    <scope>BIOPHYSICOCHEMICAL PROPERTIES</scope>
    <scope>INTERACTION WITH ARC1</scope>
</reference>
<reference key="11">
    <citation type="journal article" date="1998" name="Mol. Cell">
        <title>A conserved domain within Arc1p delivers tRNA to aminoacyl-tRNA synthetases.</title>
        <authorList>
            <person name="Simos G."/>
            <person name="Sauer A."/>
            <person name="Fasiolo F."/>
            <person name="Hurt E.C."/>
        </authorList>
    </citation>
    <scope>CATALYTIC ACTIVITY</scope>
    <scope>BIOPHYSICOCHEMICAL PROPERTIES</scope>
    <scope>INTERACTION WITH ARC1</scope>
</reference>
<reference key="12">
    <citation type="journal article" date="2001" name="EMBO J.">
        <title>The intracellular location of two aminoacyl-tRNA synthetases depends on complex formation with Arc1p.</title>
        <authorList>
            <person name="Galani K."/>
            <person name="Grosshans H."/>
            <person name="Deinert K."/>
            <person name="Hurt E.C."/>
            <person name="Simos G."/>
        </authorList>
    </citation>
    <scope>SUBUNIT</scope>
    <scope>INTERACTION WITH ARC1</scope>
    <scope>SUBCELLULAR LOCATION</scope>
</reference>
<reference key="13">
    <citation type="journal article" date="2001" name="J. Biol. Chem.">
        <title>Arc1p organizes the yeast aminoacyl-tRNA synthetase complex and stabilizes its interaction with the cognate tRNAs.</title>
        <authorList>
            <person name="Deinert K."/>
            <person name="Fasiolo F."/>
            <person name="Hurt E.C."/>
            <person name="Simos G."/>
        </authorList>
    </citation>
    <scope>SUBUNIT</scope>
</reference>
<reference key="14">
    <citation type="journal article" date="2003" name="Nature">
        <title>Global analysis of protein expression in yeast.</title>
        <authorList>
            <person name="Ghaemmaghami S."/>
            <person name="Huh W.-K."/>
            <person name="Bower K."/>
            <person name="Howson R.W."/>
            <person name="Belle A."/>
            <person name="Dephoure N."/>
            <person name="O'Shea E.K."/>
            <person name="Weissman J.S."/>
        </authorList>
    </citation>
    <scope>LEVEL OF PROTEIN EXPRESSION [LARGE SCALE ANALYSIS]</scope>
</reference>
<reference key="15">
    <citation type="journal article" date="2006" name="Nucleic Acids Res.">
        <title>Structural basis of yeast aminoacyl-tRNA synthetase complex formation revealed by crystal structures of two binary sub-complexes.</title>
        <authorList>
            <person name="Simader H."/>
            <person name="Hothorn M."/>
            <person name="Koehler C."/>
            <person name="Basquin J."/>
            <person name="Simos G."/>
            <person name="Suck D."/>
        </authorList>
    </citation>
    <scope>X-RAY CRYSTALLOGRAPHY (2.20 ANGSTROMS) OF 2-160 IN COMPLEX WITH ARC1</scope>
    <scope>MUTAGENESIS OF ALA-63</scope>
</reference>
<protein>
    <recommendedName>
        <fullName>Methionine--tRNA ligase, cytoplasmic</fullName>
        <ecNumber>6.1.1.10</ecNumber>
    </recommendedName>
    <alternativeName>
        <fullName>Methionyl-tRNA synthetase</fullName>
        <shortName>MetRS</shortName>
    </alternativeName>
</protein>
<proteinExistence type="evidence at protein level"/>
<evidence type="ECO:0000250" key="1"/>
<evidence type="ECO:0000269" key="2">
    <source>
    </source>
</evidence>
<evidence type="ECO:0000269" key="3">
    <source>
    </source>
</evidence>
<evidence type="ECO:0000269" key="4">
    <source>
    </source>
</evidence>
<evidence type="ECO:0000269" key="5">
    <source>
    </source>
</evidence>
<evidence type="ECO:0000269" key="6">
    <source>
    </source>
</evidence>
<evidence type="ECO:0000269" key="7">
    <source>
    </source>
</evidence>
<evidence type="ECO:0000269" key="8">
    <source>
    </source>
</evidence>
<evidence type="ECO:0000269" key="9">
    <source>
    </source>
</evidence>
<evidence type="ECO:0000269" key="10">
    <source>
    </source>
</evidence>
<evidence type="ECO:0000269" key="11">
    <source>
    </source>
</evidence>
<evidence type="ECO:0000305" key="12"/>
<evidence type="ECO:0007829" key="13">
    <source>
        <dbReference type="PDB" id="2HSN"/>
    </source>
</evidence>